<name>PTP24_STYPL</name>
<accession>P28216</accession>
<comment type="catalytic activity">
    <reaction evidence="3">
        <text>O-phospho-L-tyrosyl-[protein] + H2O = L-tyrosyl-[protein] + phosphate</text>
        <dbReference type="Rhea" id="RHEA:10684"/>
        <dbReference type="Rhea" id="RHEA-COMP:10136"/>
        <dbReference type="Rhea" id="RHEA-COMP:20101"/>
        <dbReference type="ChEBI" id="CHEBI:15377"/>
        <dbReference type="ChEBI" id="CHEBI:43474"/>
        <dbReference type="ChEBI" id="CHEBI:46858"/>
        <dbReference type="ChEBI" id="CHEBI:61978"/>
        <dbReference type="EC" id="3.1.3.48"/>
    </reaction>
</comment>
<comment type="similarity">
    <text evidence="4">Belongs to the protein-tyrosine phosphatase family.</text>
</comment>
<feature type="chain" id="PRO_0000094912" description="Tyrosine-protein phosphatase 24">
    <location>
        <begin position="1" status="less than"/>
        <end position="115" status="greater than"/>
    </location>
</feature>
<feature type="domain" description="Tyrosine-protein phosphatase" evidence="2">
    <location>
        <begin position="1" status="less than"/>
        <end position="115" status="greater than"/>
    </location>
</feature>
<feature type="binding site" evidence="1">
    <location>
        <position position="83"/>
    </location>
    <ligand>
        <name>substrate</name>
    </ligand>
</feature>
<feature type="non-terminal residue">
    <location>
        <position position="1"/>
    </location>
</feature>
<feature type="non-terminal residue">
    <location>
        <position position="115"/>
    </location>
</feature>
<gene>
    <name type="primary">STY-24</name>
</gene>
<proteinExistence type="evidence at transcript level"/>
<reference key="1">
    <citation type="journal article" date="1991" name="Immunogenetics">
        <title>Protein tyrosine phosphatase domains from the protochordate Styela plicata.</title>
        <authorList>
            <person name="Matthews R.J."/>
            <person name="Flores E."/>
            <person name="Thomas M.L."/>
        </authorList>
    </citation>
    <scope>NUCLEOTIDE SEQUENCE [MRNA]</scope>
</reference>
<evidence type="ECO:0000250" key="1"/>
<evidence type="ECO:0000255" key="2">
    <source>
        <dbReference type="PROSITE-ProRule" id="PRU00160"/>
    </source>
</evidence>
<evidence type="ECO:0000255" key="3">
    <source>
        <dbReference type="PROSITE-ProRule" id="PRU10044"/>
    </source>
</evidence>
<evidence type="ECO:0000305" key="4"/>
<protein>
    <recommendedName>
        <fullName>Tyrosine-protein phosphatase 24</fullName>
        <ecNumber>3.1.3.48</ecNumber>
    </recommendedName>
</protein>
<dbReference type="EC" id="3.1.3.48"/>
<dbReference type="EMBL" id="M38009">
    <property type="protein sequence ID" value="AAA29842.1"/>
    <property type="molecule type" value="mRNA"/>
</dbReference>
<dbReference type="SMR" id="P28216"/>
<dbReference type="GO" id="GO:0004725">
    <property type="term" value="F:protein tyrosine phosphatase activity"/>
    <property type="evidence" value="ECO:0007669"/>
    <property type="project" value="UniProtKB-EC"/>
</dbReference>
<dbReference type="CDD" id="cd00047">
    <property type="entry name" value="PTPc"/>
    <property type="match status" value="1"/>
</dbReference>
<dbReference type="Gene3D" id="3.90.190.10">
    <property type="entry name" value="Protein tyrosine phosphatase superfamily"/>
    <property type="match status" value="1"/>
</dbReference>
<dbReference type="InterPro" id="IPR029021">
    <property type="entry name" value="Prot-tyrosine_phosphatase-like"/>
</dbReference>
<dbReference type="InterPro" id="IPR050348">
    <property type="entry name" value="Protein-Tyr_Phosphatase"/>
</dbReference>
<dbReference type="InterPro" id="IPR000242">
    <property type="entry name" value="PTP_cat"/>
</dbReference>
<dbReference type="PANTHER" id="PTHR19134:SF562">
    <property type="entry name" value="PROTEIN-TYROSINE-PHOSPHATASE"/>
    <property type="match status" value="1"/>
</dbReference>
<dbReference type="PANTHER" id="PTHR19134">
    <property type="entry name" value="RECEPTOR-TYPE TYROSINE-PROTEIN PHOSPHATASE"/>
    <property type="match status" value="1"/>
</dbReference>
<dbReference type="Pfam" id="PF00102">
    <property type="entry name" value="Y_phosphatase"/>
    <property type="match status" value="1"/>
</dbReference>
<dbReference type="SUPFAM" id="SSF52799">
    <property type="entry name" value="(Phosphotyrosine protein) phosphatases II"/>
    <property type="match status" value="1"/>
</dbReference>
<dbReference type="PROSITE" id="PS50055">
    <property type="entry name" value="TYR_PHOSPHATASE_PTP"/>
    <property type="match status" value="1"/>
</dbReference>
<organism>
    <name type="scientific">Styela plicata</name>
    <name type="common">Wrinkled sea squirt</name>
    <name type="synonym">Ascidia plicata</name>
    <dbReference type="NCBI Taxonomy" id="7726"/>
    <lineage>
        <taxon>Eukaryota</taxon>
        <taxon>Metazoa</taxon>
        <taxon>Chordata</taxon>
        <taxon>Tunicata</taxon>
        <taxon>Ascidiacea</taxon>
        <taxon>Stolidobranchia</taxon>
        <taxon>Styelidae</taxon>
        <taxon>Styela</taxon>
    </lineage>
</organism>
<keyword id="KW-0378">Hydrolase</keyword>
<keyword id="KW-0904">Protein phosphatase</keyword>
<sequence length="115" mass="13682">WMMIVEQKCRVIVMLAKCFEAGKKKCQKYWPDSKEAKTFGRVKVFNAEEVKYCGFLRRRFYIDSFDEMMSVEVFQYQYINWPDHSVPNTTSNLVRMHKYVIQCLEETGSDAPMVV</sequence>